<proteinExistence type="inferred from homology"/>
<evidence type="ECO:0000255" key="1"/>
<evidence type="ECO:0000305" key="2"/>
<accession>P55399</accession>
<sequence length="662" mass="74394">MLFIFKNAIREIEQYFANTLSIRRMETREAAERGGERVARYDELLQFIRFCITGENHPIRLPAAPMYLDWIATAELEHGLTPKVENRFLGVVAIDGLPAESWPGILNSLDLMPLTYRWSSRFIFLDAEEARQKLERTRKKWQQKVRPFFDQLFQTQSRSVDRDAMTMVAETEDAIAQASSQLVAYGYYTPVIILFDSDREALQEKAEAIRRLIQAEGFGARIETLNATEAYLGSLPGNWYCNIREPLINTSNLADLIPLNSVWSGSPVAPCPFYPPNSPSLMQVASGSTPFRLNLHVDDVGHTLIFGPTGSGKSTLLALIAAQFRRYDRSQIFAFDKGSALLPLTLAAGGDHYEIGGDNAEGRKALAFCPLSDLESDADRAWAAEWIEMLVALQGVTITPDHRNAMSRQVTLMASAPGRSLSDFVSGVQMREIKDALHHYTVDGPMGQLLDAEHDGLSLGAFQTFEIEQLMNMGERNLVPVLTYLFRRIEKLLDGSPSVIVLDEAWLMLGHPVFRAKIREWLKVLRKANCAVVLATQSISDAERSGIIDVLKESCPTKICLPNGAAREPGTREFYERIGFNERQIEIISNATPKREYYVVTPEGRRLFDMALGPVALSFVGASGKEDLNRIRTLHSEYDRDWPVHWLQMRGFHDAASLFNVE</sequence>
<organism>
    <name type="scientific">Sinorhizobium fredii (strain NBRC 101917 / NGR234)</name>
    <dbReference type="NCBI Taxonomy" id="394"/>
    <lineage>
        <taxon>Bacteria</taxon>
        <taxon>Pseudomonadati</taxon>
        <taxon>Pseudomonadota</taxon>
        <taxon>Alphaproteobacteria</taxon>
        <taxon>Hyphomicrobiales</taxon>
        <taxon>Rhizobiaceae</taxon>
        <taxon>Sinorhizobium/Ensifer group</taxon>
        <taxon>Sinorhizobium</taxon>
    </lineage>
</organism>
<reference key="1">
    <citation type="journal article" date="1997" name="Nature">
        <title>Molecular basis of symbiosis between Rhizobium and legumes.</title>
        <authorList>
            <person name="Freiberg C.A."/>
            <person name="Fellay R."/>
            <person name="Bairoch A."/>
            <person name="Broughton W.J."/>
            <person name="Rosenthal A."/>
            <person name="Perret X."/>
        </authorList>
    </citation>
    <scope>NUCLEOTIDE SEQUENCE [LARGE SCALE GENOMIC DNA]</scope>
    <source>
        <strain>NBRC 101917 / NGR234</strain>
    </source>
</reference>
<reference key="2">
    <citation type="journal article" date="2009" name="Appl. Environ. Microbiol.">
        <title>Rhizobium sp. strain NGR234 possesses a remarkable number of secretion systems.</title>
        <authorList>
            <person name="Schmeisser C."/>
            <person name="Liesegang H."/>
            <person name="Krysciak D."/>
            <person name="Bakkou N."/>
            <person name="Le Quere A."/>
            <person name="Wollherr A."/>
            <person name="Heinemeyer I."/>
            <person name="Morgenstern B."/>
            <person name="Pommerening-Roeser A."/>
            <person name="Flores M."/>
            <person name="Palacios R."/>
            <person name="Brenner S."/>
            <person name="Gottschalk G."/>
            <person name="Schmitz R.A."/>
            <person name="Broughton W.J."/>
            <person name="Perret X."/>
            <person name="Strittmatter A.W."/>
            <person name="Streit W.R."/>
        </authorList>
    </citation>
    <scope>NUCLEOTIDE SEQUENCE [LARGE SCALE GENOMIC DNA]</scope>
    <source>
        <strain>NBRC 101917 / NGR234</strain>
    </source>
</reference>
<gene>
    <name type="primary">trbEB</name>
    <name type="ordered locus">NGR_a04170</name>
    <name type="ORF">y4cQ</name>
</gene>
<feature type="chain" id="PRO_0000065614" description="Probable conjugal transfer protein TrbE part 2">
    <location>
        <begin position="1"/>
        <end position="662"/>
    </location>
</feature>
<feature type="binding site" evidence="1">
    <location>
        <begin position="307"/>
        <end position="314"/>
    </location>
    <ligand>
        <name>ATP</name>
        <dbReference type="ChEBI" id="CHEBI:30616"/>
    </ligand>
</feature>
<comment type="similarity">
    <text evidence="2">Belongs to the TrbE/VirB4 family.</text>
</comment>
<comment type="caution">
    <text evidence="2">It is possible that trbEA and trbEB form a single orf.</text>
</comment>
<geneLocation type="plasmid">
    <name>sym pNGR234a</name>
</geneLocation>
<protein>
    <recommendedName>
        <fullName>Probable conjugal transfer protein TrbE part 2</fullName>
    </recommendedName>
</protein>
<name>TRBE2_SINFN</name>
<keyword id="KW-0067">ATP-binding</keyword>
<keyword id="KW-0184">Conjugation</keyword>
<keyword id="KW-0547">Nucleotide-binding</keyword>
<keyword id="KW-0614">Plasmid</keyword>
<keyword id="KW-1185">Reference proteome</keyword>
<dbReference type="EMBL" id="U00090">
    <property type="protein sequence ID" value="AAB92432.1"/>
    <property type="molecule type" value="Genomic_DNA"/>
</dbReference>
<dbReference type="RefSeq" id="NP_443809.1">
    <property type="nucleotide sequence ID" value="NC_000914.2"/>
</dbReference>
<dbReference type="KEGG" id="rhi:NGR_a04170"/>
<dbReference type="PATRIC" id="fig|394.7.peg.438"/>
<dbReference type="eggNOG" id="COG3451">
    <property type="taxonomic scope" value="Bacteria"/>
</dbReference>
<dbReference type="HOGENOM" id="CLU_008341_1_0_5"/>
<dbReference type="OrthoDB" id="9816422at2"/>
<dbReference type="Proteomes" id="UP000001054">
    <property type="component" value="Plasmid pNGR234a"/>
</dbReference>
<dbReference type="GO" id="GO:0005524">
    <property type="term" value="F:ATP binding"/>
    <property type="evidence" value="ECO:0007669"/>
    <property type="project" value="UniProtKB-KW"/>
</dbReference>
<dbReference type="GO" id="GO:0016887">
    <property type="term" value="F:ATP hydrolysis activity"/>
    <property type="evidence" value="ECO:0007669"/>
    <property type="project" value="InterPro"/>
</dbReference>
<dbReference type="CDD" id="cd00267">
    <property type="entry name" value="ABC_ATPase"/>
    <property type="match status" value="1"/>
</dbReference>
<dbReference type="CDD" id="cd01127">
    <property type="entry name" value="TrwB_TraG_TraD_VirD4"/>
    <property type="match status" value="1"/>
</dbReference>
<dbReference type="Gene3D" id="3.40.50.300">
    <property type="entry name" value="P-loop containing nucleotide triphosphate hydrolases"/>
    <property type="match status" value="2"/>
</dbReference>
<dbReference type="InterPro" id="IPR003593">
    <property type="entry name" value="AAA+_ATPase"/>
</dbReference>
<dbReference type="InterPro" id="IPR018145">
    <property type="entry name" value="CagE_TrbE_VirB_cntrl_dom"/>
</dbReference>
<dbReference type="InterPro" id="IPR027417">
    <property type="entry name" value="P-loop_NTPase"/>
</dbReference>
<dbReference type="InterPro" id="IPR051162">
    <property type="entry name" value="T4SS_component"/>
</dbReference>
<dbReference type="NCBIfam" id="NF010404">
    <property type="entry name" value="PRK13830.1"/>
    <property type="match status" value="1"/>
</dbReference>
<dbReference type="PANTHER" id="PTHR30121:SF12">
    <property type="entry name" value="TYPE IV SECRETION SYSTEM PROTEIN CAGE"/>
    <property type="match status" value="1"/>
</dbReference>
<dbReference type="PANTHER" id="PTHR30121">
    <property type="entry name" value="UNCHARACTERIZED PROTEIN YJGR-RELATED"/>
    <property type="match status" value="1"/>
</dbReference>
<dbReference type="Pfam" id="PF03135">
    <property type="entry name" value="CagE_TrbE_VirB"/>
    <property type="match status" value="1"/>
</dbReference>
<dbReference type="SMART" id="SM00382">
    <property type="entry name" value="AAA"/>
    <property type="match status" value="1"/>
</dbReference>
<dbReference type="SUPFAM" id="SSF52540">
    <property type="entry name" value="P-loop containing nucleoside triphosphate hydrolases"/>
    <property type="match status" value="1"/>
</dbReference>